<accession>Q2FZJ9</accession>
<evidence type="ECO:0000250" key="1"/>
<evidence type="ECO:0000255" key="2"/>
<evidence type="ECO:0000255" key="3">
    <source>
        <dbReference type="PROSITE-ProRule" id="PRU00303"/>
    </source>
</evidence>
<evidence type="ECO:0000256" key="4">
    <source>
        <dbReference type="SAM" id="MobiDB-lite"/>
    </source>
</evidence>
<evidence type="ECO:0000305" key="5"/>
<name>QOX2_STAA8</name>
<comment type="function">
    <text evidence="1">Catalyzes quinol oxidation with the concomitant reduction of oxygen to water. Subunit II transfers the electrons from a quinol to the binuclear center of the catalytic subunit I (By similarity).</text>
</comment>
<comment type="catalytic activity">
    <reaction>
        <text>2 a quinol + O2 = 2 a quinone + 2 H2O</text>
        <dbReference type="Rhea" id="RHEA:55376"/>
        <dbReference type="ChEBI" id="CHEBI:15377"/>
        <dbReference type="ChEBI" id="CHEBI:15379"/>
        <dbReference type="ChEBI" id="CHEBI:24646"/>
        <dbReference type="ChEBI" id="CHEBI:132124"/>
    </reaction>
</comment>
<comment type="subcellular location">
    <subcellularLocation>
        <location evidence="3">Cell membrane</location>
        <topology evidence="1">Multi-pass membrane protein</topology>
    </subcellularLocation>
</comment>
<comment type="similarity">
    <text evidence="5">Belongs to the cytochrome c oxidase subunit 2 family.</text>
</comment>
<sequence>MSKFKSLLLLFGTLILLSGCSNIEIFNAKGPVASSQKFLILYSIVFMLVICFVVLGMFAIFIYKYSYNKNAESGKMHHNAIIETIWFVIPIIIVAALAIPTVKTLYDYEKPPKSEKDPMVVYAVSAGYKWFFAYPDEHIETVNTLTIPKDRPVVFKLQAMDTMTSFWIPQLGGQKYAMTGMTMNWTLEASQTGTFRGRNSNFNGEGFSRQTFKVNAVSQKDYDKWVKEVKGKKTLDQDTFDKQLLPSTPNKALEFNGTHMAFVDPAADPEYIFYAYKRFNFELKDPNFTSEENMFKDVSDKPLIPARKAQITNANYKRHGMKLMILGNDEPYNNEFKKDESKNAKEMKKISKDAQDQDNDDHGGGH</sequence>
<protein>
    <recommendedName>
        <fullName>Probable quinol oxidase subunit 2</fullName>
        <ecNumber>1.10.3.-</ecNumber>
    </recommendedName>
    <alternativeName>
        <fullName>Quinol oxidase polypeptide II</fullName>
    </alternativeName>
</protein>
<reference key="1">
    <citation type="book" date="2006" name="Gram positive pathogens, 2nd edition">
        <title>The Staphylococcus aureus NCTC 8325 genome.</title>
        <editorList>
            <person name="Fischetti V."/>
            <person name="Novick R."/>
            <person name="Ferretti J."/>
            <person name="Portnoy D."/>
            <person name="Rood J."/>
        </editorList>
        <authorList>
            <person name="Gillaspy A.F."/>
            <person name="Worrell V."/>
            <person name="Orvis J."/>
            <person name="Roe B.A."/>
            <person name="Dyer D.W."/>
            <person name="Iandolo J.J."/>
        </authorList>
    </citation>
    <scope>NUCLEOTIDE SEQUENCE [LARGE SCALE GENOMIC DNA]</scope>
    <source>
        <strain>NCTC 8325 / PS 47</strain>
    </source>
</reference>
<proteinExistence type="inferred from homology"/>
<organism>
    <name type="scientific">Staphylococcus aureus (strain NCTC 8325 / PS 47)</name>
    <dbReference type="NCBI Taxonomy" id="93061"/>
    <lineage>
        <taxon>Bacteria</taxon>
        <taxon>Bacillati</taxon>
        <taxon>Bacillota</taxon>
        <taxon>Bacilli</taxon>
        <taxon>Bacillales</taxon>
        <taxon>Staphylococcaceae</taxon>
        <taxon>Staphylococcus</taxon>
    </lineage>
</organism>
<keyword id="KW-1003">Cell membrane</keyword>
<keyword id="KW-0249">Electron transport</keyword>
<keyword id="KW-0449">Lipoprotein</keyword>
<keyword id="KW-0472">Membrane</keyword>
<keyword id="KW-0560">Oxidoreductase</keyword>
<keyword id="KW-0564">Palmitate</keyword>
<keyword id="KW-1185">Reference proteome</keyword>
<keyword id="KW-0679">Respiratory chain</keyword>
<keyword id="KW-0732">Signal</keyword>
<keyword id="KW-0812">Transmembrane</keyword>
<keyword id="KW-1133">Transmembrane helix</keyword>
<keyword id="KW-0813">Transport</keyword>
<gene>
    <name type="primary">qoxA</name>
    <name type="ordered locus">SAOUHSC_01002</name>
</gene>
<dbReference type="EC" id="1.10.3.-"/>
<dbReference type="EMBL" id="CP000253">
    <property type="protein sequence ID" value="ABD30126.1"/>
    <property type="molecule type" value="Genomic_DNA"/>
</dbReference>
<dbReference type="RefSeq" id="WP_000032836.1">
    <property type="nucleotide sequence ID" value="NZ_LS483365.1"/>
</dbReference>
<dbReference type="RefSeq" id="YP_499554.1">
    <property type="nucleotide sequence ID" value="NC_007795.1"/>
</dbReference>
<dbReference type="SMR" id="Q2FZJ9"/>
<dbReference type="STRING" id="93061.SAOUHSC_01002"/>
<dbReference type="PaxDb" id="1280-SAXN108_1058"/>
<dbReference type="GeneID" id="3920402"/>
<dbReference type="KEGG" id="sao:SAOUHSC_01002"/>
<dbReference type="PATRIC" id="fig|93061.5.peg.920"/>
<dbReference type="eggNOG" id="COG1622">
    <property type="taxonomic scope" value="Bacteria"/>
</dbReference>
<dbReference type="HOGENOM" id="CLU_036876_6_0_9"/>
<dbReference type="OrthoDB" id="9781261at2"/>
<dbReference type="Proteomes" id="UP000008816">
    <property type="component" value="Chromosome"/>
</dbReference>
<dbReference type="GO" id="GO:0005886">
    <property type="term" value="C:plasma membrane"/>
    <property type="evidence" value="ECO:0007669"/>
    <property type="project" value="UniProtKB-SubCell"/>
</dbReference>
<dbReference type="GO" id="GO:0005507">
    <property type="term" value="F:copper ion binding"/>
    <property type="evidence" value="ECO:0007669"/>
    <property type="project" value="InterPro"/>
</dbReference>
<dbReference type="GO" id="GO:0009486">
    <property type="term" value="F:cytochrome bo3 ubiquinol oxidase activity"/>
    <property type="evidence" value="ECO:0007669"/>
    <property type="project" value="InterPro"/>
</dbReference>
<dbReference type="GO" id="GO:0004129">
    <property type="term" value="F:cytochrome-c oxidase activity"/>
    <property type="evidence" value="ECO:0007669"/>
    <property type="project" value="InterPro"/>
</dbReference>
<dbReference type="GO" id="GO:0016682">
    <property type="term" value="F:oxidoreductase activity, acting on diphenols and related substances as donors, oxygen as acceptor"/>
    <property type="evidence" value="ECO:0007669"/>
    <property type="project" value="InterPro"/>
</dbReference>
<dbReference type="GO" id="GO:0042773">
    <property type="term" value="P:ATP synthesis coupled electron transport"/>
    <property type="evidence" value="ECO:0000318"/>
    <property type="project" value="GO_Central"/>
</dbReference>
<dbReference type="CDD" id="cd04212">
    <property type="entry name" value="CuRO_UO_II"/>
    <property type="match status" value="1"/>
</dbReference>
<dbReference type="FunFam" id="2.60.40.420:FF:000014">
    <property type="entry name" value="Quinol oxidase subunit 2"/>
    <property type="match status" value="1"/>
</dbReference>
<dbReference type="Gene3D" id="1.10.287.90">
    <property type="match status" value="1"/>
</dbReference>
<dbReference type="Gene3D" id="2.60.40.420">
    <property type="entry name" value="Cupredoxins - blue copper proteins"/>
    <property type="match status" value="1"/>
</dbReference>
<dbReference type="InterPro" id="IPR045187">
    <property type="entry name" value="CcO_II"/>
</dbReference>
<dbReference type="InterPro" id="IPR002429">
    <property type="entry name" value="CcO_II-like_C"/>
</dbReference>
<dbReference type="InterPro" id="IPR008972">
    <property type="entry name" value="Cupredoxin"/>
</dbReference>
<dbReference type="InterPro" id="IPR034227">
    <property type="entry name" value="CuRO_UO_II"/>
</dbReference>
<dbReference type="InterPro" id="IPR011759">
    <property type="entry name" value="Cyt_c_oxidase_su2_TM_dom"/>
</dbReference>
<dbReference type="InterPro" id="IPR036257">
    <property type="entry name" value="Cyt_c_oxidase_su2_TM_sf"/>
</dbReference>
<dbReference type="InterPro" id="IPR006332">
    <property type="entry name" value="QoxA"/>
</dbReference>
<dbReference type="NCBIfam" id="TIGR01432">
    <property type="entry name" value="QOXA"/>
    <property type="match status" value="1"/>
</dbReference>
<dbReference type="PANTHER" id="PTHR22888:SF18">
    <property type="entry name" value="CYTOCHROME BO(3) UBIQUINOL OXIDASE SUBUNIT 2"/>
    <property type="match status" value="1"/>
</dbReference>
<dbReference type="PANTHER" id="PTHR22888">
    <property type="entry name" value="CYTOCHROME C OXIDASE, SUBUNIT II"/>
    <property type="match status" value="1"/>
</dbReference>
<dbReference type="Pfam" id="PF02790">
    <property type="entry name" value="COX2_TM"/>
    <property type="match status" value="1"/>
</dbReference>
<dbReference type="SUPFAM" id="SSF49503">
    <property type="entry name" value="Cupredoxins"/>
    <property type="match status" value="1"/>
</dbReference>
<dbReference type="SUPFAM" id="SSF81464">
    <property type="entry name" value="Cytochrome c oxidase subunit II-like, transmembrane region"/>
    <property type="match status" value="1"/>
</dbReference>
<dbReference type="PROSITE" id="PS50857">
    <property type="entry name" value="COX2_CUA"/>
    <property type="match status" value="1"/>
</dbReference>
<dbReference type="PROSITE" id="PS50999">
    <property type="entry name" value="COX2_TM"/>
    <property type="match status" value="1"/>
</dbReference>
<dbReference type="PROSITE" id="PS51257">
    <property type="entry name" value="PROKAR_LIPOPROTEIN"/>
    <property type="match status" value="1"/>
</dbReference>
<feature type="signal peptide" evidence="3">
    <location>
        <begin position="1"/>
        <end position="19"/>
    </location>
</feature>
<feature type="chain" id="PRO_0000275878" description="Probable quinol oxidase subunit 2">
    <location>
        <begin position="20"/>
        <end position="366"/>
    </location>
</feature>
<feature type="transmembrane region" description="Helical" evidence="2">
    <location>
        <begin position="38"/>
        <end position="58"/>
    </location>
</feature>
<feature type="transmembrane region" description="Helical" evidence="2">
    <location>
        <begin position="80"/>
        <end position="100"/>
    </location>
</feature>
<feature type="region of interest" description="Disordered" evidence="4">
    <location>
        <begin position="330"/>
        <end position="366"/>
    </location>
</feature>
<feature type="compositionally biased region" description="Basic and acidic residues" evidence="4">
    <location>
        <begin position="335"/>
        <end position="366"/>
    </location>
</feature>
<feature type="lipid moiety-binding region" description="N-palmitoyl cysteine" evidence="3">
    <location>
        <position position="20"/>
    </location>
</feature>
<feature type="lipid moiety-binding region" description="S-diacylglycerol cysteine" evidence="3">
    <location>
        <position position="20"/>
    </location>
</feature>